<evidence type="ECO:0000250" key="1"/>
<evidence type="ECO:0000250" key="2">
    <source>
        <dbReference type="UniProtKB" id="P10415"/>
    </source>
</evidence>
<evidence type="ECO:0000250" key="3">
    <source>
        <dbReference type="UniProtKB" id="P10417"/>
    </source>
</evidence>
<evidence type="ECO:0000255" key="4"/>
<evidence type="ECO:0000305" key="5"/>
<accession>Q6R755</accession>
<comment type="function">
    <text evidence="2">Suppresses apoptosis in a variety of cell systems including factor-dependent lymphohematopoietic and neural cells. Regulates cell death by controlling the mitochondrial membrane permeability. Appears to function in a feedback loop system with caspases. Inhibits caspase activity either by preventing the release of cytochrome c from the mitochondria and/or by binding to the apoptosis-activating factor (APAF-1). Also acts as an inhibitor of autophagy: interacts with BECN1 and AMBRA1 during non-starvation conditions and inhibits their autophagy function. May attenuate inflammation by impairing NLRP1-inflammasome activation, hence CASP1 activation and IL1B release.</text>
</comment>
<comment type="subunit">
    <text evidence="2 3">Forms homodimers, and heterodimers with BAX, BAD, BAK and Bcl-X(L). Heterodimerization with BAX requires intact BH1 and BH2 motifs, and is necessary for anti-apoptotic activity (By similarity). Component of the complex, at least composed of LRPPRC, BECN1 and BCL2; the interactions prevent BECN1 from forming an autophagy-inducing complex with PIK3C3 (By similarity). Interacts with EI24 (By similarity). Also interacts with APAF1, BBC3, BCL2L1, BNIPL, MRPL41 and TP53BP2. Binding to FKBP8 seems to target BCL2 to the mitochondria and probably interferes with the binding of BCL2 to its targets. Interacts with BAG1 in an ATP-dependent manner. Interacts with RAF1 (the 'Ser-338' and 'Ser-339' phosphorylated form). Interacts (via the BH4 domain) with EGLN3; the interaction prevents the formation of the BAX-BCL2 complex and inhibits the anti-apoptotic activity of BCL2. Interacts with G0S2; this interaction also prevents the formation of the anti-apoptotic BAX-BCL2 complex. Interacts with RTL10/BOP. Interacts with the SCF(FBXO10) complex. Interacts (via the loop between motifs BH4 and BH3) with NLRP1 (via LRR repeats), but not with NLRP2, NLRP3, NLRP4, PYCARD, nor MEFV (By similarity). Interacts with GIMAP3/IAN4, GIMAP4/IAN1 and GIMAP5/IAN5 (By similarity). Interacts with BCAP31. Interacts with IRF3; the interaction is inhibited by Sendai virus infection. Interacts with BECN1; thereby inhibiting autophagy in non-starvation conditions. Interacts with AMBRA1; thereby inhibiting autophagy (By similarity).</text>
</comment>
<comment type="subcellular location">
    <subcellularLocation>
        <location evidence="2">Mitochondrion outer membrane</location>
        <topology evidence="4">Single-pass membrane protein</topology>
    </subcellularLocation>
    <subcellularLocation>
        <location evidence="2">Nucleus membrane</location>
        <topology evidence="4">Single-pass membrane protein</topology>
    </subcellularLocation>
    <subcellularLocation>
        <location evidence="2">Endoplasmic reticulum membrane</location>
        <topology evidence="4">Single-pass membrane protein</topology>
    </subcellularLocation>
    <subcellularLocation>
        <location evidence="3">Cytoplasm</location>
    </subcellularLocation>
</comment>
<comment type="domain">
    <text evidence="1">The BH4 motif is required for anti-apoptotic activity and for interaction with RAF1 and EGLN3.</text>
</comment>
<comment type="domain">
    <text evidence="2">BH1 and BH2 domains are required for the interaction with BAX and for anti-apoptotic activity.</text>
</comment>
<comment type="domain">
    <text evidence="2">The loop between motifs BH4 and BH3 is required for the interaction with NLRP1.</text>
</comment>
<comment type="domain">
    <text evidence="2">The BH3 motif is required for XIAP-mediated ubiquitination and subsequent induction of apoptosis.</text>
</comment>
<comment type="PTM">
    <text evidence="2 3">Phosphorylation/dephosphorylation on Ser-70 regulates anti-apoptotic activity. Growth factor-stimulated phosphorylation on Ser-70 by PKC is required for the anti-apoptosis activity and occurs during the G2/M phase of the cell cycle (By similarity). In the absence of growth factors, BCL2 appears to be phosphorylated by other protein kinases such as ERKs and stress-activated kinases (By similarity). Phosphorylated by MAPK8/JNK1 at Thr-69, Ser-70 and Ser-84, which stimulates starvation-induced autophagy (By similarity). Dephosphorylated by protein phosphatase 2A (PP2A) (By similarity).</text>
</comment>
<comment type="PTM">
    <text evidence="2">Proteolytically cleaved by caspases during apoptosis. The cleaved protein, lacking the BH4 motif, has pro-apoptotic activity, causes the release of cytochrome c into the cytosol promoting further caspase activity (By similarity).</text>
</comment>
<comment type="PTM">
    <text evidence="2">Monoubiquitinated by PRKN, leading to an increase in its stability. Ubiquitinated by SCF(FBXO10), leading to its degradation by the proteasome.</text>
</comment>
<comment type="similarity">
    <text evidence="5">Belongs to the Bcl-2 family.</text>
</comment>
<reference key="1">
    <citation type="submission" date="2003-12" db="EMBL/GenBank/DDBJ databases">
        <authorList>
            <person name="Chien M.B."/>
            <person name="London C.A."/>
            <person name="Jones C.S."/>
        </authorList>
    </citation>
    <scope>NUCLEOTIDE SEQUENCE [MRNA]</scope>
</reference>
<organism>
    <name type="scientific">Canis lupus familiaris</name>
    <name type="common">Dog</name>
    <name type="synonym">Canis familiaris</name>
    <dbReference type="NCBI Taxonomy" id="9615"/>
    <lineage>
        <taxon>Eukaryota</taxon>
        <taxon>Metazoa</taxon>
        <taxon>Chordata</taxon>
        <taxon>Craniata</taxon>
        <taxon>Vertebrata</taxon>
        <taxon>Euteleostomi</taxon>
        <taxon>Mammalia</taxon>
        <taxon>Eutheria</taxon>
        <taxon>Laurasiatheria</taxon>
        <taxon>Carnivora</taxon>
        <taxon>Caniformia</taxon>
        <taxon>Canidae</taxon>
        <taxon>Canis</taxon>
    </lineage>
</organism>
<keyword id="KW-0053">Apoptosis</keyword>
<keyword id="KW-0072">Autophagy</keyword>
<keyword id="KW-0963">Cytoplasm</keyword>
<keyword id="KW-0256">Endoplasmic reticulum</keyword>
<keyword id="KW-0472">Membrane</keyword>
<keyword id="KW-0496">Mitochondrion</keyword>
<keyword id="KW-1000">Mitochondrion outer membrane</keyword>
<keyword id="KW-0539">Nucleus</keyword>
<keyword id="KW-0597">Phosphoprotein</keyword>
<keyword id="KW-1185">Reference proteome</keyword>
<keyword id="KW-0812">Transmembrane</keyword>
<keyword id="KW-1133">Transmembrane helix</keyword>
<keyword id="KW-0832">Ubl conjugation</keyword>
<gene>
    <name type="primary">BCL2</name>
</gene>
<proteinExistence type="evidence at transcript level"/>
<name>BCL2_CANLF</name>
<protein>
    <recommendedName>
        <fullName>Apoptosis regulator Bcl-2</fullName>
    </recommendedName>
</protein>
<sequence length="236" mass="26449">MAQAGRTGYDNREIVMKYIHYKLSQRGYEWDVGDVDAAPLGAAPTPGIFSFQPESNPTPAVHRDMAARTSPLRPIVATTGPTLSPVPPVVHLTLRRAGDDFSRRYRRDFAEMSSQLHLTPFTARGRFATVVEELFRDGVNWGRIVAFFEFGGVMCVESVNREMSPLVDNIALWMTEYLNRHLHTWIQDNGGWDAFVELYGPTMQPLFDFSWLSLKALLSLALVGACITLGAYLGHK</sequence>
<feature type="chain" id="PRO_0000289601" description="Apoptosis regulator Bcl-2">
    <location>
        <begin position="1"/>
        <end position="236"/>
    </location>
</feature>
<feature type="transmembrane region" description="Helical" evidence="4">
    <location>
        <begin position="209"/>
        <end position="230"/>
    </location>
</feature>
<feature type="short sequence motif" description="BH4">
    <location>
        <begin position="10"/>
        <end position="30"/>
    </location>
</feature>
<feature type="short sequence motif" description="BH3">
    <location>
        <begin position="90"/>
        <end position="104"/>
    </location>
</feature>
<feature type="short sequence motif" description="BH1">
    <location>
        <begin position="133"/>
        <end position="152"/>
    </location>
</feature>
<feature type="short sequence motif" description="BH2">
    <location>
        <begin position="184"/>
        <end position="199"/>
    </location>
</feature>
<feature type="site" description="Cleavage; by caspase-3 and caspase-9">
    <location>
        <begin position="64"/>
        <end position="65"/>
    </location>
</feature>
<feature type="modified residue" description="Phosphothreonine; by MAPK8" evidence="2">
    <location>
        <position position="69"/>
    </location>
</feature>
<feature type="modified residue" description="Phosphoserine; by MAPK8 and PKC" evidence="2">
    <location>
        <position position="70"/>
    </location>
</feature>
<feature type="modified residue" description="Phosphoserine; by MAPK8" evidence="2">
    <location>
        <position position="84"/>
    </location>
</feature>
<dbReference type="EMBL" id="AY509563">
    <property type="protein sequence ID" value="AAR92491.1"/>
    <property type="molecule type" value="mRNA"/>
</dbReference>
<dbReference type="SMR" id="Q6R755"/>
<dbReference type="FunCoup" id="Q6R755">
    <property type="interactions" value="194"/>
</dbReference>
<dbReference type="STRING" id="9615.ENSCAFP00000000102"/>
<dbReference type="InParanoid" id="Q6R755"/>
<dbReference type="OrthoDB" id="6021377at2759"/>
<dbReference type="Proteomes" id="UP000002254">
    <property type="component" value="Unplaced"/>
</dbReference>
<dbReference type="Proteomes" id="UP000694429">
    <property type="component" value="Unplaced"/>
</dbReference>
<dbReference type="Proteomes" id="UP000694542">
    <property type="component" value="Unplaced"/>
</dbReference>
<dbReference type="Proteomes" id="UP000805418">
    <property type="component" value="Unplaced"/>
</dbReference>
<dbReference type="GO" id="GO:0005789">
    <property type="term" value="C:endoplasmic reticulum membrane"/>
    <property type="evidence" value="ECO:0000250"/>
    <property type="project" value="UniProtKB"/>
</dbReference>
<dbReference type="GO" id="GO:0005741">
    <property type="term" value="C:mitochondrial outer membrane"/>
    <property type="evidence" value="ECO:0000250"/>
    <property type="project" value="UniProtKB"/>
</dbReference>
<dbReference type="GO" id="GO:0031965">
    <property type="term" value="C:nuclear membrane"/>
    <property type="evidence" value="ECO:0007669"/>
    <property type="project" value="UniProtKB-SubCell"/>
</dbReference>
<dbReference type="GO" id="GO:0015267">
    <property type="term" value="F:channel activity"/>
    <property type="evidence" value="ECO:0000318"/>
    <property type="project" value="GO_Central"/>
</dbReference>
<dbReference type="GO" id="GO:0006914">
    <property type="term" value="P:autophagy"/>
    <property type="evidence" value="ECO:0007669"/>
    <property type="project" value="UniProtKB-KW"/>
</dbReference>
<dbReference type="GO" id="GO:0097192">
    <property type="term" value="P:extrinsic apoptotic signaling pathway in absence of ligand"/>
    <property type="evidence" value="ECO:0000318"/>
    <property type="project" value="GO_Central"/>
</dbReference>
<dbReference type="GO" id="GO:0008630">
    <property type="term" value="P:intrinsic apoptotic signaling pathway in response to DNA damage"/>
    <property type="evidence" value="ECO:0000318"/>
    <property type="project" value="GO_Central"/>
</dbReference>
<dbReference type="GO" id="GO:0043066">
    <property type="term" value="P:negative regulation of apoptotic process"/>
    <property type="evidence" value="ECO:0007669"/>
    <property type="project" value="InterPro"/>
</dbReference>
<dbReference type="GO" id="GO:0010507">
    <property type="term" value="P:negative regulation of autophagy"/>
    <property type="evidence" value="ECO:0000250"/>
    <property type="project" value="UniProtKB"/>
</dbReference>
<dbReference type="GO" id="GO:0043065">
    <property type="term" value="P:positive regulation of apoptotic process"/>
    <property type="evidence" value="ECO:0000318"/>
    <property type="project" value="GO_Central"/>
</dbReference>
<dbReference type="GO" id="GO:0001836">
    <property type="term" value="P:release of cytochrome c from mitochondria"/>
    <property type="evidence" value="ECO:0000318"/>
    <property type="project" value="GO_Central"/>
</dbReference>
<dbReference type="CDD" id="cd06845">
    <property type="entry name" value="Bcl-2_like"/>
    <property type="match status" value="1"/>
</dbReference>
<dbReference type="FunFam" id="1.10.437.10:FF:000006">
    <property type="entry name" value="Apoptosis regulator Bcl-2"/>
    <property type="match status" value="1"/>
</dbReference>
<dbReference type="Gene3D" id="1.10.437.10">
    <property type="entry name" value="Blc2-like"/>
    <property type="match status" value="1"/>
</dbReference>
<dbReference type="InterPro" id="IPR013278">
    <property type="entry name" value="Apop_reg_Bcl2"/>
</dbReference>
<dbReference type="InterPro" id="IPR036834">
    <property type="entry name" value="Bcl-2-like_sf"/>
</dbReference>
<dbReference type="InterPro" id="IPR046371">
    <property type="entry name" value="Bcl-2_BH1-3"/>
</dbReference>
<dbReference type="InterPro" id="IPR026298">
    <property type="entry name" value="Bcl-2_fam"/>
</dbReference>
<dbReference type="InterPro" id="IPR002475">
    <property type="entry name" value="Bcl2-like"/>
</dbReference>
<dbReference type="InterPro" id="IPR004725">
    <property type="entry name" value="Bcl2/BclX"/>
</dbReference>
<dbReference type="InterPro" id="IPR020717">
    <property type="entry name" value="Bcl2_BH1_motif_CS"/>
</dbReference>
<dbReference type="InterPro" id="IPR020726">
    <property type="entry name" value="Bcl2_BH2_motif_CS"/>
</dbReference>
<dbReference type="InterPro" id="IPR020728">
    <property type="entry name" value="Bcl2_BH3_motif_CS"/>
</dbReference>
<dbReference type="InterPro" id="IPR003093">
    <property type="entry name" value="Bcl2_BH4"/>
</dbReference>
<dbReference type="InterPro" id="IPR020731">
    <property type="entry name" value="Bcl2_BH4_motif_CS"/>
</dbReference>
<dbReference type="NCBIfam" id="TIGR00865">
    <property type="entry name" value="bcl-2"/>
    <property type="match status" value="1"/>
</dbReference>
<dbReference type="PANTHER" id="PTHR11256:SF60">
    <property type="entry name" value="APOPTOSIS REGULATOR BCL-2"/>
    <property type="match status" value="1"/>
</dbReference>
<dbReference type="PANTHER" id="PTHR11256">
    <property type="entry name" value="BCL-2 RELATED"/>
    <property type="match status" value="1"/>
</dbReference>
<dbReference type="Pfam" id="PF00452">
    <property type="entry name" value="Bcl-2"/>
    <property type="match status" value="1"/>
</dbReference>
<dbReference type="Pfam" id="PF02180">
    <property type="entry name" value="BH4"/>
    <property type="match status" value="1"/>
</dbReference>
<dbReference type="PRINTS" id="PR01863">
    <property type="entry name" value="APOPREGBCL2"/>
</dbReference>
<dbReference type="PRINTS" id="PR01862">
    <property type="entry name" value="BCL2FAMILY"/>
</dbReference>
<dbReference type="SMART" id="SM00337">
    <property type="entry name" value="BCL"/>
    <property type="match status" value="1"/>
</dbReference>
<dbReference type="SMART" id="SM00265">
    <property type="entry name" value="BH4"/>
    <property type="match status" value="1"/>
</dbReference>
<dbReference type="SUPFAM" id="SSF56854">
    <property type="entry name" value="Bcl-2 inhibitors of programmed cell death"/>
    <property type="match status" value="1"/>
</dbReference>
<dbReference type="PROSITE" id="PS50062">
    <property type="entry name" value="BCL2_FAMILY"/>
    <property type="match status" value="1"/>
</dbReference>
<dbReference type="PROSITE" id="PS01080">
    <property type="entry name" value="BH1"/>
    <property type="match status" value="1"/>
</dbReference>
<dbReference type="PROSITE" id="PS01258">
    <property type="entry name" value="BH2"/>
    <property type="match status" value="1"/>
</dbReference>
<dbReference type="PROSITE" id="PS01259">
    <property type="entry name" value="BH3"/>
    <property type="match status" value="1"/>
</dbReference>
<dbReference type="PROSITE" id="PS01260">
    <property type="entry name" value="BH4_1"/>
    <property type="match status" value="1"/>
</dbReference>
<dbReference type="PROSITE" id="PS50063">
    <property type="entry name" value="BH4_2"/>
    <property type="match status" value="1"/>
</dbReference>